<dbReference type="EC" id="4.1.1.37" evidence="1"/>
<dbReference type="EMBL" id="AM286690">
    <property type="protein sequence ID" value="CAL17675.1"/>
    <property type="molecule type" value="Genomic_DNA"/>
</dbReference>
<dbReference type="RefSeq" id="WP_011589503.1">
    <property type="nucleotide sequence ID" value="NC_008260.1"/>
</dbReference>
<dbReference type="SMR" id="Q0VMC3"/>
<dbReference type="STRING" id="393595.ABO_2227"/>
<dbReference type="KEGG" id="abo:ABO_2227"/>
<dbReference type="eggNOG" id="COG0407">
    <property type="taxonomic scope" value="Bacteria"/>
</dbReference>
<dbReference type="HOGENOM" id="CLU_040933_0_0_6"/>
<dbReference type="OrthoDB" id="9806656at2"/>
<dbReference type="UniPathway" id="UPA00251">
    <property type="reaction ID" value="UER00321"/>
</dbReference>
<dbReference type="Proteomes" id="UP000008871">
    <property type="component" value="Chromosome"/>
</dbReference>
<dbReference type="GO" id="GO:0005829">
    <property type="term" value="C:cytosol"/>
    <property type="evidence" value="ECO:0007669"/>
    <property type="project" value="TreeGrafter"/>
</dbReference>
<dbReference type="GO" id="GO:0004853">
    <property type="term" value="F:uroporphyrinogen decarboxylase activity"/>
    <property type="evidence" value="ECO:0007669"/>
    <property type="project" value="UniProtKB-UniRule"/>
</dbReference>
<dbReference type="GO" id="GO:0019353">
    <property type="term" value="P:protoporphyrinogen IX biosynthetic process from glutamate"/>
    <property type="evidence" value="ECO:0007669"/>
    <property type="project" value="TreeGrafter"/>
</dbReference>
<dbReference type="CDD" id="cd00717">
    <property type="entry name" value="URO-D"/>
    <property type="match status" value="1"/>
</dbReference>
<dbReference type="FunFam" id="3.20.20.210:FF:000001">
    <property type="entry name" value="Uroporphyrinogen decarboxylase"/>
    <property type="match status" value="1"/>
</dbReference>
<dbReference type="Gene3D" id="3.20.20.210">
    <property type="match status" value="1"/>
</dbReference>
<dbReference type="HAMAP" id="MF_00218">
    <property type="entry name" value="URO_D"/>
    <property type="match status" value="1"/>
</dbReference>
<dbReference type="InterPro" id="IPR038071">
    <property type="entry name" value="UROD/MetE-like_sf"/>
</dbReference>
<dbReference type="InterPro" id="IPR006361">
    <property type="entry name" value="Uroporphyrinogen_deCO2ase_HemE"/>
</dbReference>
<dbReference type="InterPro" id="IPR000257">
    <property type="entry name" value="Uroporphyrinogen_deCOase"/>
</dbReference>
<dbReference type="NCBIfam" id="TIGR01464">
    <property type="entry name" value="hemE"/>
    <property type="match status" value="1"/>
</dbReference>
<dbReference type="PANTHER" id="PTHR21091">
    <property type="entry name" value="METHYLTETRAHYDROFOLATE:HOMOCYSTEINE METHYLTRANSFERASE RELATED"/>
    <property type="match status" value="1"/>
</dbReference>
<dbReference type="PANTHER" id="PTHR21091:SF169">
    <property type="entry name" value="UROPORPHYRINOGEN DECARBOXYLASE"/>
    <property type="match status" value="1"/>
</dbReference>
<dbReference type="Pfam" id="PF01208">
    <property type="entry name" value="URO-D"/>
    <property type="match status" value="1"/>
</dbReference>
<dbReference type="SUPFAM" id="SSF51726">
    <property type="entry name" value="UROD/MetE-like"/>
    <property type="match status" value="1"/>
</dbReference>
<dbReference type="PROSITE" id="PS00906">
    <property type="entry name" value="UROD_1"/>
    <property type="match status" value="1"/>
</dbReference>
<dbReference type="PROSITE" id="PS00907">
    <property type="entry name" value="UROD_2"/>
    <property type="match status" value="1"/>
</dbReference>
<keyword id="KW-0963">Cytoplasm</keyword>
<keyword id="KW-0210">Decarboxylase</keyword>
<keyword id="KW-0456">Lyase</keyword>
<keyword id="KW-0627">Porphyrin biosynthesis</keyword>
<keyword id="KW-1185">Reference proteome</keyword>
<name>DCUP_ALCBS</name>
<gene>
    <name evidence="1" type="primary">hemE</name>
    <name type="ordered locus">ABO_2227</name>
</gene>
<accession>Q0VMC3</accession>
<reference key="1">
    <citation type="journal article" date="2006" name="Nat. Biotechnol.">
        <title>Genome sequence of the ubiquitous hydrocarbon-degrading marine bacterium Alcanivorax borkumensis.</title>
        <authorList>
            <person name="Schneiker S."/>
            <person name="Martins dos Santos V.A.P."/>
            <person name="Bartels D."/>
            <person name="Bekel T."/>
            <person name="Brecht M."/>
            <person name="Buhrmester J."/>
            <person name="Chernikova T.N."/>
            <person name="Denaro R."/>
            <person name="Ferrer M."/>
            <person name="Gertler C."/>
            <person name="Goesmann A."/>
            <person name="Golyshina O.V."/>
            <person name="Kaminski F."/>
            <person name="Khachane A.N."/>
            <person name="Lang S."/>
            <person name="Linke B."/>
            <person name="McHardy A.C."/>
            <person name="Meyer F."/>
            <person name="Nechitaylo T."/>
            <person name="Puehler A."/>
            <person name="Regenhardt D."/>
            <person name="Rupp O."/>
            <person name="Sabirova J.S."/>
            <person name="Selbitschka W."/>
            <person name="Yakimov M.M."/>
            <person name="Timmis K.N."/>
            <person name="Vorhoelter F.-J."/>
            <person name="Weidner S."/>
            <person name="Kaiser O."/>
            <person name="Golyshin P.N."/>
        </authorList>
    </citation>
    <scope>NUCLEOTIDE SEQUENCE [LARGE SCALE GENOMIC DNA]</scope>
    <source>
        <strain>ATCC 700651 / DSM 11573 / NCIMB 13689 / SK2</strain>
    </source>
</reference>
<organism>
    <name type="scientific">Alcanivorax borkumensis (strain ATCC 700651 / DSM 11573 / NCIMB 13689 / SK2)</name>
    <dbReference type="NCBI Taxonomy" id="393595"/>
    <lineage>
        <taxon>Bacteria</taxon>
        <taxon>Pseudomonadati</taxon>
        <taxon>Pseudomonadota</taxon>
        <taxon>Gammaproteobacteria</taxon>
        <taxon>Oceanospirillales</taxon>
        <taxon>Alcanivoracaceae</taxon>
        <taxon>Alcanivorax</taxon>
    </lineage>
</organism>
<sequence length="353" mass="38968">MTFAPLQNDRFLRALNRETVDRTPIWMMRQAGRYLPEYRAAREHAGSFMDLCKNADLACEVTLQPLERYPLDAAILFSDILTIPDAMGLGLYFETGEGPKFRKVVRTEADVAALPIPDAESDLGYVMNAVSTIRGALNGRVPLIGFSGSPWTLATYMVEGGSSKDFRHLKAMVYSQPELAHAMLDKLAQSVTGYLNAQIRHGAQAVQIFDTWGGALSAEAYKEFSLRYMQQIVDGLIRDNEGRKVPVILFTKNGGLWLESMAATGCDALGLDWTINIGDARRRVGDKVALQGNMDPAVLYASPQAIRAEVKRILDDFGDHPGHIFNLGHGITPQVDPEHAKVFIEAVVELSQK</sequence>
<proteinExistence type="inferred from homology"/>
<protein>
    <recommendedName>
        <fullName evidence="1">Uroporphyrinogen decarboxylase</fullName>
        <shortName evidence="1">UPD</shortName>
        <shortName evidence="1">URO-D</shortName>
        <ecNumber evidence="1">4.1.1.37</ecNumber>
    </recommendedName>
</protein>
<feature type="chain" id="PRO_0000325620" description="Uroporphyrinogen decarboxylase">
    <location>
        <begin position="1"/>
        <end position="353"/>
    </location>
</feature>
<feature type="binding site" evidence="1">
    <location>
        <begin position="29"/>
        <end position="33"/>
    </location>
    <ligand>
        <name>substrate</name>
    </ligand>
</feature>
<feature type="binding site" evidence="1">
    <location>
        <position position="79"/>
    </location>
    <ligand>
        <name>substrate</name>
    </ligand>
</feature>
<feature type="binding site" evidence="1">
    <location>
        <position position="156"/>
    </location>
    <ligand>
        <name>substrate</name>
    </ligand>
</feature>
<feature type="binding site" evidence="1">
    <location>
        <position position="211"/>
    </location>
    <ligand>
        <name>substrate</name>
    </ligand>
</feature>
<feature type="binding site" evidence="1">
    <location>
        <position position="329"/>
    </location>
    <ligand>
        <name>substrate</name>
    </ligand>
</feature>
<feature type="site" description="Transition state stabilizer" evidence="1">
    <location>
        <position position="79"/>
    </location>
</feature>
<comment type="function">
    <text evidence="1">Catalyzes the decarboxylation of four acetate groups of uroporphyrinogen-III to yield coproporphyrinogen-III.</text>
</comment>
<comment type="catalytic activity">
    <reaction evidence="1">
        <text>uroporphyrinogen III + 4 H(+) = coproporphyrinogen III + 4 CO2</text>
        <dbReference type="Rhea" id="RHEA:19865"/>
        <dbReference type="ChEBI" id="CHEBI:15378"/>
        <dbReference type="ChEBI" id="CHEBI:16526"/>
        <dbReference type="ChEBI" id="CHEBI:57308"/>
        <dbReference type="ChEBI" id="CHEBI:57309"/>
        <dbReference type="EC" id="4.1.1.37"/>
    </reaction>
</comment>
<comment type="pathway">
    <text evidence="1">Porphyrin-containing compound metabolism; protoporphyrin-IX biosynthesis; coproporphyrinogen-III from 5-aminolevulinate: step 4/4.</text>
</comment>
<comment type="subunit">
    <text evidence="1">Homodimer.</text>
</comment>
<comment type="subcellular location">
    <subcellularLocation>
        <location evidence="1">Cytoplasm</location>
    </subcellularLocation>
</comment>
<comment type="similarity">
    <text evidence="1">Belongs to the uroporphyrinogen decarboxylase family.</text>
</comment>
<evidence type="ECO:0000255" key="1">
    <source>
        <dbReference type="HAMAP-Rule" id="MF_00218"/>
    </source>
</evidence>